<protein>
    <recommendedName>
        <fullName evidence="1">Putative iron-sulfur cluster insertion protein ErpA</fullName>
    </recommendedName>
</protein>
<dbReference type="EMBL" id="CP000546">
    <property type="protein sequence ID" value="ABN02101.1"/>
    <property type="molecule type" value="Genomic_DNA"/>
</dbReference>
<dbReference type="RefSeq" id="WP_004194247.1">
    <property type="nucleotide sequence ID" value="NC_008836.1"/>
</dbReference>
<dbReference type="SMR" id="A2S583"/>
<dbReference type="GeneID" id="93061505"/>
<dbReference type="KEGG" id="bml:BMA10229_A1117"/>
<dbReference type="HOGENOM" id="CLU_069054_5_3_4"/>
<dbReference type="Proteomes" id="UP000002283">
    <property type="component" value="Chromosome I"/>
</dbReference>
<dbReference type="GO" id="GO:0051537">
    <property type="term" value="F:2 iron, 2 sulfur cluster binding"/>
    <property type="evidence" value="ECO:0007669"/>
    <property type="project" value="UniProtKB-ARBA"/>
</dbReference>
<dbReference type="GO" id="GO:0051539">
    <property type="term" value="F:4 iron, 4 sulfur cluster binding"/>
    <property type="evidence" value="ECO:0007669"/>
    <property type="project" value="TreeGrafter"/>
</dbReference>
<dbReference type="GO" id="GO:0005506">
    <property type="term" value="F:iron ion binding"/>
    <property type="evidence" value="ECO:0007669"/>
    <property type="project" value="UniProtKB-UniRule"/>
</dbReference>
<dbReference type="GO" id="GO:0016226">
    <property type="term" value="P:iron-sulfur cluster assembly"/>
    <property type="evidence" value="ECO:0007669"/>
    <property type="project" value="UniProtKB-UniRule"/>
</dbReference>
<dbReference type="FunFam" id="2.60.300.12:FF:000002">
    <property type="entry name" value="Iron-sulfur cluster insertion protein ErpA"/>
    <property type="match status" value="1"/>
</dbReference>
<dbReference type="Gene3D" id="2.60.300.12">
    <property type="entry name" value="HesB-like domain"/>
    <property type="match status" value="1"/>
</dbReference>
<dbReference type="HAMAP" id="MF_01380">
    <property type="entry name" value="Fe_S_insert_ErpA"/>
    <property type="match status" value="1"/>
</dbReference>
<dbReference type="InterPro" id="IPR000361">
    <property type="entry name" value="FeS_biogenesis"/>
</dbReference>
<dbReference type="InterPro" id="IPR016092">
    <property type="entry name" value="FeS_cluster_insertion"/>
</dbReference>
<dbReference type="InterPro" id="IPR017870">
    <property type="entry name" value="FeS_cluster_insertion_CS"/>
</dbReference>
<dbReference type="InterPro" id="IPR023063">
    <property type="entry name" value="FeS_cluster_insertion_RrpA"/>
</dbReference>
<dbReference type="InterPro" id="IPR035903">
    <property type="entry name" value="HesB-like_dom_sf"/>
</dbReference>
<dbReference type="NCBIfam" id="TIGR00049">
    <property type="entry name" value="iron-sulfur cluster assembly accessory protein"/>
    <property type="match status" value="1"/>
</dbReference>
<dbReference type="NCBIfam" id="NF010147">
    <property type="entry name" value="PRK13623.1"/>
    <property type="match status" value="1"/>
</dbReference>
<dbReference type="PANTHER" id="PTHR43011">
    <property type="entry name" value="IRON-SULFUR CLUSTER ASSEMBLY 2 HOMOLOG, MITOCHONDRIAL"/>
    <property type="match status" value="1"/>
</dbReference>
<dbReference type="PANTHER" id="PTHR43011:SF1">
    <property type="entry name" value="IRON-SULFUR CLUSTER ASSEMBLY 2 HOMOLOG, MITOCHONDRIAL"/>
    <property type="match status" value="1"/>
</dbReference>
<dbReference type="Pfam" id="PF01521">
    <property type="entry name" value="Fe-S_biosyn"/>
    <property type="match status" value="1"/>
</dbReference>
<dbReference type="SUPFAM" id="SSF89360">
    <property type="entry name" value="HesB-like domain"/>
    <property type="match status" value="1"/>
</dbReference>
<dbReference type="PROSITE" id="PS01152">
    <property type="entry name" value="HESB"/>
    <property type="match status" value="1"/>
</dbReference>
<gene>
    <name evidence="1" type="primary">erpA</name>
    <name type="ordered locus">BMA10229_A1117</name>
</gene>
<proteinExistence type="inferred from homology"/>
<reference key="1">
    <citation type="journal article" date="2010" name="Genome Biol. Evol.">
        <title>Continuing evolution of Burkholderia mallei through genome reduction and large-scale rearrangements.</title>
        <authorList>
            <person name="Losada L."/>
            <person name="Ronning C.M."/>
            <person name="DeShazer D."/>
            <person name="Woods D."/>
            <person name="Fedorova N."/>
            <person name="Kim H.S."/>
            <person name="Shabalina S.A."/>
            <person name="Pearson T.R."/>
            <person name="Brinkac L."/>
            <person name="Tan P."/>
            <person name="Nandi T."/>
            <person name="Crabtree J."/>
            <person name="Badger J."/>
            <person name="Beckstrom-Sternberg S."/>
            <person name="Saqib M."/>
            <person name="Schutzer S.E."/>
            <person name="Keim P."/>
            <person name="Nierman W.C."/>
        </authorList>
    </citation>
    <scope>NUCLEOTIDE SEQUENCE [LARGE SCALE GENOMIC DNA]</scope>
    <source>
        <strain>NCTC 10229</strain>
    </source>
</reference>
<comment type="function">
    <text evidence="1">Required for insertion of 4Fe-4S clusters.</text>
</comment>
<comment type="cofactor">
    <cofactor evidence="1">
        <name>iron-sulfur cluster</name>
        <dbReference type="ChEBI" id="CHEBI:30408"/>
    </cofactor>
    <text evidence="1">Binds 1 iron-sulfur cluster per subunit.</text>
</comment>
<comment type="subunit">
    <text evidence="1">Homodimer.</text>
</comment>
<comment type="similarity">
    <text evidence="1">Belongs to the HesB/IscA family.</text>
</comment>
<name>ERPA_BURM9</name>
<keyword id="KW-0408">Iron</keyword>
<keyword id="KW-0411">Iron-sulfur</keyword>
<keyword id="KW-0479">Metal-binding</keyword>
<feature type="chain" id="PRO_0000311458" description="Putative iron-sulfur cluster insertion protein ErpA">
    <location>
        <begin position="1"/>
        <end position="122"/>
    </location>
</feature>
<feature type="binding site" evidence="1">
    <location>
        <position position="50"/>
    </location>
    <ligand>
        <name>iron-sulfur cluster</name>
        <dbReference type="ChEBI" id="CHEBI:30408"/>
    </ligand>
</feature>
<feature type="binding site" evidence="1">
    <location>
        <position position="114"/>
    </location>
    <ligand>
        <name>iron-sulfur cluster</name>
        <dbReference type="ChEBI" id="CHEBI:30408"/>
    </ligand>
</feature>
<feature type="binding site" evidence="1">
    <location>
        <position position="116"/>
    </location>
    <ligand>
        <name>iron-sulfur cluster</name>
        <dbReference type="ChEBI" id="CHEBI:30408"/>
    </ligand>
</feature>
<accession>A2S583</accession>
<sequence>MNAVTESAATTEMPAPFVFTDAAADKVKQLIDEEGNPDLKLRVFVQGGGCSGFQYGFTFDEEVNEDDTVLNKNGVVLLVDAMSYQYLVGAEIDYKDDLNGAQFVIKNPNATTTCGCGSSFSV</sequence>
<evidence type="ECO:0000255" key="1">
    <source>
        <dbReference type="HAMAP-Rule" id="MF_01380"/>
    </source>
</evidence>
<organism>
    <name type="scientific">Burkholderia mallei (strain NCTC 10229)</name>
    <dbReference type="NCBI Taxonomy" id="412022"/>
    <lineage>
        <taxon>Bacteria</taxon>
        <taxon>Pseudomonadati</taxon>
        <taxon>Pseudomonadota</taxon>
        <taxon>Betaproteobacteria</taxon>
        <taxon>Burkholderiales</taxon>
        <taxon>Burkholderiaceae</taxon>
        <taxon>Burkholderia</taxon>
        <taxon>pseudomallei group</taxon>
    </lineage>
</organism>